<organism>
    <name type="scientific">Trieres chinensis</name>
    <name type="common">Marine centric diatom</name>
    <name type="synonym">Odontella sinensis</name>
    <dbReference type="NCBI Taxonomy" id="1514140"/>
    <lineage>
        <taxon>Eukaryota</taxon>
        <taxon>Sar</taxon>
        <taxon>Stramenopiles</taxon>
        <taxon>Ochrophyta</taxon>
        <taxon>Bacillariophyta</taxon>
        <taxon>Mediophyceae</taxon>
        <taxon>Biddulphiophycidae</taxon>
        <taxon>Eupodiscales</taxon>
        <taxon>Parodontellaceae</taxon>
        <taxon>Trieres</taxon>
    </lineage>
</organism>
<geneLocation type="chloroplast"/>
<name>RK16_TRICV</name>
<accession>P49553</accession>
<feature type="chain" id="PRO_0000062296" description="Large ribosomal subunit protein uL16c">
    <location>
        <begin position="1"/>
        <end position="137"/>
    </location>
</feature>
<protein>
    <recommendedName>
        <fullName evidence="1">Large ribosomal subunit protein uL16c</fullName>
    </recommendedName>
    <alternativeName>
        <fullName evidence="2">50S ribosomal protein L16, chloroplastic</fullName>
    </alternativeName>
</protein>
<keyword id="KW-0150">Chloroplast</keyword>
<keyword id="KW-0934">Plastid</keyword>
<keyword id="KW-0687">Ribonucleoprotein</keyword>
<keyword id="KW-0689">Ribosomal protein</keyword>
<evidence type="ECO:0000255" key="1">
    <source>
        <dbReference type="HAMAP-Rule" id="MF_01342"/>
    </source>
</evidence>
<evidence type="ECO:0000305" key="2"/>
<sequence>MLSPKRTKYRKYHRGRMRGKATRGNEVTFGDYGLQALEPTWITSRQIEAARRTITRYTKRGAALWIRIFPDKTVTARAAESRMGSGKGAVDYWVAVVKPGTILFEIASVPEEIAATALHLASYKLPIKTKFITRIKI</sequence>
<comment type="subunit">
    <text evidence="1">Part of the 50S ribosomal subunit.</text>
</comment>
<comment type="subcellular location">
    <subcellularLocation>
        <location>Plastid</location>
        <location>Chloroplast</location>
    </subcellularLocation>
</comment>
<comment type="similarity">
    <text evidence="1">Belongs to the universal ribosomal protein uL16 family.</text>
</comment>
<gene>
    <name evidence="1" type="primary">rpl16</name>
</gene>
<dbReference type="EMBL" id="Z67753">
    <property type="protein sequence ID" value="CAA91641.1"/>
    <property type="molecule type" value="Genomic_DNA"/>
</dbReference>
<dbReference type="PIR" id="S78268">
    <property type="entry name" value="S78268"/>
</dbReference>
<dbReference type="RefSeq" id="NP_043609.1">
    <property type="nucleotide sequence ID" value="NC_001713.1"/>
</dbReference>
<dbReference type="SMR" id="P49553"/>
<dbReference type="GeneID" id="801732"/>
<dbReference type="GO" id="GO:0009507">
    <property type="term" value="C:chloroplast"/>
    <property type="evidence" value="ECO:0007669"/>
    <property type="project" value="UniProtKB-SubCell"/>
</dbReference>
<dbReference type="GO" id="GO:0005762">
    <property type="term" value="C:mitochondrial large ribosomal subunit"/>
    <property type="evidence" value="ECO:0007669"/>
    <property type="project" value="TreeGrafter"/>
</dbReference>
<dbReference type="GO" id="GO:0019843">
    <property type="term" value="F:rRNA binding"/>
    <property type="evidence" value="ECO:0007669"/>
    <property type="project" value="InterPro"/>
</dbReference>
<dbReference type="GO" id="GO:0003735">
    <property type="term" value="F:structural constituent of ribosome"/>
    <property type="evidence" value="ECO:0007669"/>
    <property type="project" value="InterPro"/>
</dbReference>
<dbReference type="GO" id="GO:0032543">
    <property type="term" value="P:mitochondrial translation"/>
    <property type="evidence" value="ECO:0007669"/>
    <property type="project" value="TreeGrafter"/>
</dbReference>
<dbReference type="CDD" id="cd01433">
    <property type="entry name" value="Ribosomal_L16_L10e"/>
    <property type="match status" value="1"/>
</dbReference>
<dbReference type="FunFam" id="3.90.1170.10:FF:000001">
    <property type="entry name" value="50S ribosomal protein L16"/>
    <property type="match status" value="1"/>
</dbReference>
<dbReference type="Gene3D" id="3.90.1170.10">
    <property type="entry name" value="Ribosomal protein L10e/L16"/>
    <property type="match status" value="1"/>
</dbReference>
<dbReference type="HAMAP" id="MF_01342">
    <property type="entry name" value="Ribosomal_uL16"/>
    <property type="match status" value="1"/>
</dbReference>
<dbReference type="InterPro" id="IPR047873">
    <property type="entry name" value="Ribosomal_uL16"/>
</dbReference>
<dbReference type="InterPro" id="IPR000114">
    <property type="entry name" value="Ribosomal_uL16_bact-type"/>
</dbReference>
<dbReference type="InterPro" id="IPR020798">
    <property type="entry name" value="Ribosomal_uL16_CS"/>
</dbReference>
<dbReference type="InterPro" id="IPR016180">
    <property type="entry name" value="Ribosomal_uL16_dom"/>
</dbReference>
<dbReference type="InterPro" id="IPR036920">
    <property type="entry name" value="Ribosomal_uL16_sf"/>
</dbReference>
<dbReference type="NCBIfam" id="TIGR01164">
    <property type="entry name" value="rplP_bact"/>
    <property type="match status" value="1"/>
</dbReference>
<dbReference type="PANTHER" id="PTHR12220">
    <property type="entry name" value="50S/60S RIBOSOMAL PROTEIN L16"/>
    <property type="match status" value="1"/>
</dbReference>
<dbReference type="PANTHER" id="PTHR12220:SF13">
    <property type="entry name" value="LARGE RIBOSOMAL SUBUNIT PROTEIN UL16M"/>
    <property type="match status" value="1"/>
</dbReference>
<dbReference type="Pfam" id="PF00252">
    <property type="entry name" value="Ribosomal_L16"/>
    <property type="match status" value="1"/>
</dbReference>
<dbReference type="PRINTS" id="PR00060">
    <property type="entry name" value="RIBOSOMALL16"/>
</dbReference>
<dbReference type="SUPFAM" id="SSF54686">
    <property type="entry name" value="Ribosomal protein L16p/L10e"/>
    <property type="match status" value="1"/>
</dbReference>
<dbReference type="PROSITE" id="PS00586">
    <property type="entry name" value="RIBOSOMAL_L16_1"/>
    <property type="match status" value="1"/>
</dbReference>
<dbReference type="PROSITE" id="PS00701">
    <property type="entry name" value="RIBOSOMAL_L16_2"/>
    <property type="match status" value="1"/>
</dbReference>
<proteinExistence type="inferred from homology"/>
<reference key="1">
    <citation type="journal article" date="1995" name="Plant Mol. Biol. Rep.">
        <title>The chloroplast genome of a chlorophyll a+c-containing alga, Odontella sinensis.</title>
        <authorList>
            <person name="Kowallik K.V."/>
            <person name="Stoebe B."/>
            <person name="Schaffran I."/>
            <person name="Kroth-Pancic P."/>
            <person name="Freier U."/>
        </authorList>
    </citation>
    <scope>NUCLEOTIDE SEQUENCE [LARGE SCALE GENOMIC DNA]</scope>
</reference>